<protein>
    <recommendedName>
        <fullName>Uncharacterized transporter BF2680</fullName>
    </recommendedName>
</protein>
<comment type="subcellular location">
    <subcellularLocation>
        <location evidence="3">Cell membrane</location>
        <topology evidence="3">Multi-pass membrane protein</topology>
    </subcellularLocation>
</comment>
<comment type="similarity">
    <text evidence="3">Belongs to the AAE transporter (TC 2.A.81) family.</text>
</comment>
<sequence>MFTDLLHSSYFSLFLIVALGFMLGRIKIKGLSLDVSAVIFIALLFGHFGVIIPKELGNFGLVLFIFTIGIQAGPGFFDSFRSKGKTLIIITMLIISSACLTAVGLKYAFGIDTPSVVGLVAGALTSTPGLAVAIDSTNSPLASIAYGIAYPFGVIGVILFVKLLPKIMRIDLDKEARRLEIERRGQFPELGTCIYRITNPSVFGRSLMQINARAMTGAVISRLKHQEEISIPTAHTVLHEGDYIQAVGSEEALTQLAVLVGEREEGELPLENTQEIESLLLTKKDMINKQLGDLNLMKNFGCTVTRVRRSGIDLSPSPDLALKFGDKLMVVGEKEGIKGVARLLGNNAKKLSDTDFFPIAMGIVLGVLFGKLNISFPGGLSFSPGLTGGVLMVALLLSAIGKTGPILWSMSGPANQLLRQLGLLLFLAEVGTSAGKNLVATFQESGLLLFGVGAAITLVPMLIAAFVGRLVFKISLLDLLGTITGGMTSTPGLAAADSMVDSNIPSVAYATVYPIAMVFLILFIQVIATVVY</sequence>
<evidence type="ECO:0000255" key="1"/>
<evidence type="ECO:0000255" key="2">
    <source>
        <dbReference type="PROSITE-ProRule" id="PRU00544"/>
    </source>
</evidence>
<evidence type="ECO:0000305" key="3"/>
<proteinExistence type="inferred from homology"/>
<feature type="chain" id="PRO_0000208752" description="Uncharacterized transporter BF2680">
    <location>
        <begin position="1"/>
        <end position="532"/>
    </location>
</feature>
<feature type="transmembrane region" description="Helical" evidence="1">
    <location>
        <begin position="7"/>
        <end position="26"/>
    </location>
</feature>
<feature type="transmembrane region" description="Helical" evidence="1">
    <location>
        <begin position="30"/>
        <end position="52"/>
    </location>
</feature>
<feature type="transmembrane region" description="Helical" evidence="1">
    <location>
        <begin position="59"/>
        <end position="77"/>
    </location>
</feature>
<feature type="transmembrane region" description="Helical" evidence="1">
    <location>
        <begin position="87"/>
        <end position="109"/>
    </location>
</feature>
<feature type="transmembrane region" description="Helical" evidence="1">
    <location>
        <begin position="116"/>
        <end position="134"/>
    </location>
</feature>
<feature type="transmembrane region" description="Helical" evidence="1">
    <location>
        <begin position="139"/>
        <end position="161"/>
    </location>
</feature>
<feature type="transmembrane region" description="Helical" evidence="1">
    <location>
        <begin position="356"/>
        <end position="378"/>
    </location>
</feature>
<feature type="transmembrane region" description="Helical" evidence="1">
    <location>
        <begin position="388"/>
        <end position="410"/>
    </location>
</feature>
<feature type="transmembrane region" description="Helical" evidence="1">
    <location>
        <begin position="446"/>
        <end position="468"/>
    </location>
</feature>
<feature type="transmembrane region" description="Helical" evidence="1">
    <location>
        <begin position="509"/>
        <end position="531"/>
    </location>
</feature>
<feature type="domain" description="RCK C-terminal 1" evidence="2">
    <location>
        <begin position="179"/>
        <end position="262"/>
    </location>
</feature>
<feature type="domain" description="RCK C-terminal 2" evidence="2">
    <location>
        <begin position="263"/>
        <end position="346"/>
    </location>
</feature>
<gene>
    <name type="ordered locus">BF2680</name>
</gene>
<organism>
    <name type="scientific">Bacteroides fragilis (strain YCH46)</name>
    <dbReference type="NCBI Taxonomy" id="295405"/>
    <lineage>
        <taxon>Bacteria</taxon>
        <taxon>Pseudomonadati</taxon>
        <taxon>Bacteroidota</taxon>
        <taxon>Bacteroidia</taxon>
        <taxon>Bacteroidales</taxon>
        <taxon>Bacteroidaceae</taxon>
        <taxon>Bacteroides</taxon>
    </lineage>
</organism>
<reference key="1">
    <citation type="journal article" date="2004" name="Proc. Natl. Acad. Sci. U.S.A.">
        <title>Genomic analysis of Bacteroides fragilis reveals extensive DNA inversions regulating cell surface adaptation.</title>
        <authorList>
            <person name="Kuwahara T."/>
            <person name="Yamashita A."/>
            <person name="Hirakawa H."/>
            <person name="Nakayama H."/>
            <person name="Toh H."/>
            <person name="Okada N."/>
            <person name="Kuhara S."/>
            <person name="Hattori M."/>
            <person name="Hayashi T."/>
            <person name="Ohnishi Y."/>
        </authorList>
    </citation>
    <scope>NUCLEOTIDE SEQUENCE [LARGE SCALE GENOMIC DNA]</scope>
    <source>
        <strain>YCH46</strain>
    </source>
</reference>
<name>Y2680_BACFR</name>
<dbReference type="EMBL" id="AP006841">
    <property type="protein sequence ID" value="BAD49430.1"/>
    <property type="molecule type" value="Genomic_DNA"/>
</dbReference>
<dbReference type="RefSeq" id="WP_005788346.1">
    <property type="nucleotide sequence ID" value="NC_006347.1"/>
</dbReference>
<dbReference type="RefSeq" id="YP_099964.1">
    <property type="nucleotide sequence ID" value="NC_006347.1"/>
</dbReference>
<dbReference type="SMR" id="Q64SU9"/>
<dbReference type="STRING" id="295405.BF2680"/>
<dbReference type="KEGG" id="bfr:BF2680"/>
<dbReference type="PATRIC" id="fig|295405.11.peg.2592"/>
<dbReference type="HOGENOM" id="CLU_035023_3_0_10"/>
<dbReference type="OrthoDB" id="9155749at2"/>
<dbReference type="Proteomes" id="UP000002197">
    <property type="component" value="Chromosome"/>
</dbReference>
<dbReference type="GO" id="GO:0005886">
    <property type="term" value="C:plasma membrane"/>
    <property type="evidence" value="ECO:0007669"/>
    <property type="project" value="UniProtKB-SubCell"/>
</dbReference>
<dbReference type="GO" id="GO:0008324">
    <property type="term" value="F:monoatomic cation transmembrane transporter activity"/>
    <property type="evidence" value="ECO:0007669"/>
    <property type="project" value="InterPro"/>
</dbReference>
<dbReference type="GO" id="GO:0006813">
    <property type="term" value="P:potassium ion transport"/>
    <property type="evidence" value="ECO:0007669"/>
    <property type="project" value="InterPro"/>
</dbReference>
<dbReference type="Gene3D" id="3.30.70.1450">
    <property type="entry name" value="Regulator of K+ conductance, C-terminal domain"/>
    <property type="match status" value="2"/>
</dbReference>
<dbReference type="InterPro" id="IPR050144">
    <property type="entry name" value="AAE_transporter"/>
</dbReference>
<dbReference type="InterPro" id="IPR006037">
    <property type="entry name" value="RCK_C"/>
</dbReference>
<dbReference type="InterPro" id="IPR036721">
    <property type="entry name" value="RCK_C_sf"/>
</dbReference>
<dbReference type="InterPro" id="IPR006512">
    <property type="entry name" value="YidE_YbjL"/>
</dbReference>
<dbReference type="NCBIfam" id="TIGR01625">
    <property type="entry name" value="YidE_YbjL_dupl"/>
    <property type="match status" value="2"/>
</dbReference>
<dbReference type="PANTHER" id="PTHR30445">
    <property type="entry name" value="K(+)_H(+) ANTIPORTER SUBUNIT KHTT"/>
    <property type="match status" value="1"/>
</dbReference>
<dbReference type="PANTHER" id="PTHR30445:SF3">
    <property type="entry name" value="TRANSPORT PROTEIN YIDE-RELATED"/>
    <property type="match status" value="1"/>
</dbReference>
<dbReference type="Pfam" id="PF06826">
    <property type="entry name" value="Asp-Al_Ex"/>
    <property type="match status" value="2"/>
</dbReference>
<dbReference type="Pfam" id="PF02080">
    <property type="entry name" value="TrkA_C"/>
    <property type="match status" value="2"/>
</dbReference>
<dbReference type="SUPFAM" id="SSF116726">
    <property type="entry name" value="TrkA C-terminal domain-like"/>
    <property type="match status" value="2"/>
</dbReference>
<dbReference type="PROSITE" id="PS51202">
    <property type="entry name" value="RCK_C"/>
    <property type="match status" value="2"/>
</dbReference>
<keyword id="KW-1003">Cell membrane</keyword>
<keyword id="KW-0472">Membrane</keyword>
<keyword id="KW-0677">Repeat</keyword>
<keyword id="KW-0812">Transmembrane</keyword>
<keyword id="KW-1133">Transmembrane helix</keyword>
<keyword id="KW-0813">Transport</keyword>
<accession>Q64SU9</accession>